<name>B651B_ARATH</name>
<proteinExistence type="evidence at transcript level"/>
<keyword id="KW-0249">Electron transport</keyword>
<keyword id="KW-0349">Heme</keyword>
<keyword id="KW-0408">Iron</keyword>
<keyword id="KW-0472">Membrane</keyword>
<keyword id="KW-0479">Metal-binding</keyword>
<keyword id="KW-1185">Reference proteome</keyword>
<keyword id="KW-0732">Signal</keyword>
<keyword id="KW-0812">Transmembrane</keyword>
<keyword id="KW-1133">Transmembrane helix</keyword>
<keyword id="KW-0813">Transport</keyword>
<organism>
    <name type="scientific">Arabidopsis thaliana</name>
    <name type="common">Mouse-ear cress</name>
    <dbReference type="NCBI Taxonomy" id="3702"/>
    <lineage>
        <taxon>Eukaryota</taxon>
        <taxon>Viridiplantae</taxon>
        <taxon>Streptophyta</taxon>
        <taxon>Embryophyta</taxon>
        <taxon>Tracheophyta</taxon>
        <taxon>Spermatophyta</taxon>
        <taxon>Magnoliopsida</taxon>
        <taxon>eudicotyledons</taxon>
        <taxon>Gunneridae</taxon>
        <taxon>Pentapetalae</taxon>
        <taxon>rosids</taxon>
        <taxon>malvids</taxon>
        <taxon>Brassicales</taxon>
        <taxon>Brassicaceae</taxon>
        <taxon>Camelineae</taxon>
        <taxon>Arabidopsis</taxon>
    </lineage>
</organism>
<accession>Q8VYH6</accession>
<accession>O23571</accession>
<dbReference type="EMBL" id="Z97343">
    <property type="protein sequence ID" value="CAB10509.1"/>
    <property type="status" value="ALT_SEQ"/>
    <property type="molecule type" value="Genomic_DNA"/>
</dbReference>
<dbReference type="EMBL" id="AL161546">
    <property type="protein sequence ID" value="CAB78731.1"/>
    <property type="status" value="ALT_SEQ"/>
    <property type="molecule type" value="Genomic_DNA"/>
</dbReference>
<dbReference type="EMBL" id="CP002687">
    <property type="protein sequence ID" value="AEE83873.1"/>
    <property type="molecule type" value="Genomic_DNA"/>
</dbReference>
<dbReference type="EMBL" id="AY072011">
    <property type="protein sequence ID" value="AAL57706.1"/>
    <property type="molecule type" value="mRNA"/>
</dbReference>
<dbReference type="EMBL" id="BT002717">
    <property type="protein sequence ID" value="AAO11633.1"/>
    <property type="molecule type" value="mRNA"/>
</dbReference>
<dbReference type="PIR" id="H71441">
    <property type="entry name" value="H71441"/>
</dbReference>
<dbReference type="RefSeq" id="NP_193461.5">
    <property type="nucleotide sequence ID" value="NM_117834.7"/>
</dbReference>
<dbReference type="SMR" id="Q8VYH6"/>
<dbReference type="BioGRID" id="12735">
    <property type="interactions" value="4"/>
</dbReference>
<dbReference type="FunCoup" id="Q8VYH6">
    <property type="interactions" value="207"/>
</dbReference>
<dbReference type="STRING" id="3702.Q8VYH6"/>
<dbReference type="PaxDb" id="3702-AT4G17280.1"/>
<dbReference type="ProteomicsDB" id="241118"/>
<dbReference type="EnsemblPlants" id="AT4G17280.1">
    <property type="protein sequence ID" value="AT4G17280.1"/>
    <property type="gene ID" value="AT4G17280"/>
</dbReference>
<dbReference type="GeneID" id="827442"/>
<dbReference type="Gramene" id="AT4G17280.1">
    <property type="protein sequence ID" value="AT4G17280.1"/>
    <property type="gene ID" value="AT4G17280"/>
</dbReference>
<dbReference type="KEGG" id="ath:AT4G17280"/>
<dbReference type="Araport" id="AT4G17280"/>
<dbReference type="TAIR" id="AT4G17280"/>
<dbReference type="eggNOG" id="KOG4293">
    <property type="taxonomic scope" value="Eukaryota"/>
</dbReference>
<dbReference type="HOGENOM" id="CLU_036675_1_1_1"/>
<dbReference type="InParanoid" id="Q8VYH6"/>
<dbReference type="OMA" id="KPEKKWK"/>
<dbReference type="PhylomeDB" id="Q8VYH6"/>
<dbReference type="PRO" id="PR:Q8VYH6"/>
<dbReference type="Proteomes" id="UP000006548">
    <property type="component" value="Chromosome 4"/>
</dbReference>
<dbReference type="ExpressionAtlas" id="Q8VYH6">
    <property type="expression patterns" value="baseline and differential"/>
</dbReference>
<dbReference type="GO" id="GO:0016020">
    <property type="term" value="C:membrane"/>
    <property type="evidence" value="ECO:0007669"/>
    <property type="project" value="UniProtKB-SubCell"/>
</dbReference>
<dbReference type="GO" id="GO:0046872">
    <property type="term" value="F:metal ion binding"/>
    <property type="evidence" value="ECO:0007669"/>
    <property type="project" value="UniProtKB-KW"/>
</dbReference>
<dbReference type="CDD" id="cd08760">
    <property type="entry name" value="Cyt_b561_FRRS1_like"/>
    <property type="match status" value="1"/>
</dbReference>
<dbReference type="CDD" id="cd09629">
    <property type="entry name" value="DOMON_CIL1_like"/>
    <property type="match status" value="1"/>
</dbReference>
<dbReference type="FunFam" id="1.20.120.1770:FF:000007">
    <property type="entry name" value="Cytochrome b561 and DOMON domain-containing protein"/>
    <property type="match status" value="1"/>
</dbReference>
<dbReference type="Gene3D" id="1.20.120.1770">
    <property type="match status" value="1"/>
</dbReference>
<dbReference type="InterPro" id="IPR045265">
    <property type="entry name" value="AIR12_DOMON"/>
</dbReference>
<dbReference type="InterPro" id="IPR006593">
    <property type="entry name" value="Cyt_b561/ferric_Rdtase_TM"/>
</dbReference>
<dbReference type="InterPro" id="IPR005018">
    <property type="entry name" value="DOMON_domain"/>
</dbReference>
<dbReference type="InterPro" id="IPR017214">
    <property type="entry name" value="UCP037471"/>
</dbReference>
<dbReference type="PANTHER" id="PTHR23130">
    <property type="entry name" value="CYTOCHROME B561 AND DOMON DOMAIN-CONTAINING PROTEIN"/>
    <property type="match status" value="1"/>
</dbReference>
<dbReference type="PANTHER" id="PTHR23130:SF177">
    <property type="entry name" value="CYTOCHROME B561 AND DOMON DOMAIN-CONTAINING PROTEIN"/>
    <property type="match status" value="1"/>
</dbReference>
<dbReference type="Pfam" id="PF03188">
    <property type="entry name" value="Cytochrom_B561"/>
    <property type="match status" value="1"/>
</dbReference>
<dbReference type="Pfam" id="PF04526">
    <property type="entry name" value="DUF568"/>
    <property type="match status" value="1"/>
</dbReference>
<dbReference type="PIRSF" id="PIRSF037471">
    <property type="entry name" value="UCP037471"/>
    <property type="match status" value="1"/>
</dbReference>
<dbReference type="SMART" id="SM00665">
    <property type="entry name" value="B561"/>
    <property type="match status" value="1"/>
</dbReference>
<dbReference type="PROSITE" id="PS50939">
    <property type="entry name" value="CYTOCHROME_B561"/>
    <property type="match status" value="1"/>
</dbReference>
<dbReference type="PROSITE" id="PS50836">
    <property type="entry name" value="DOMON"/>
    <property type="match status" value="1"/>
</dbReference>
<gene>
    <name type="ordered locus">At4g17280</name>
    <name type="ORF">dl4675c</name>
    <name type="ORF">FCAALL.393</name>
</gene>
<sequence length="402" mass="43679">MSNHMSIMKFLNQILCLSLILSISMTTLSFAQTCSKYKFSSNNVFDSCNDLPFLDSFLHYTYESSTGSLHIAYRHTKLTSGKWVAWAVNPTSTGMVGAQAIVAYPQSDGTVRVYTSPIRSYQTSLLEGDLSFNVSGLSATYQNNEIVVLASLKLAQDLGNGGTINTVWQDGSMSGNSLLPHPTSGNNVRSVSTLNLVSGVSAAAGGAGGSSKLRKRNIHGILNGVSWGIMMPLGAIIARYLRVAKSADPAWFYIHVFCQASAYIIGVAGWATGLKLGGDSPGIQYSTHRAIGIALFSLATVQVFAMFLRPKPEHKHRLYWNIYHHTIGYTIIILGVVNVFKGLGILSPKKQWKNAYIGIIVVLAIVATLLEAFTWYVVIKRRKLEAKTAQHGASNGTRSQYA</sequence>
<reference key="1">
    <citation type="journal article" date="1998" name="Nature">
        <title>Analysis of 1.9 Mb of contiguous sequence from chromosome 4 of Arabidopsis thaliana.</title>
        <authorList>
            <person name="Bevan M."/>
            <person name="Bancroft I."/>
            <person name="Bent E."/>
            <person name="Love K."/>
            <person name="Goodman H.M."/>
            <person name="Dean C."/>
            <person name="Bergkamp R."/>
            <person name="Dirkse W."/>
            <person name="van Staveren M."/>
            <person name="Stiekema W."/>
            <person name="Drost L."/>
            <person name="Ridley P."/>
            <person name="Hudson S.-A."/>
            <person name="Patel K."/>
            <person name="Murphy G."/>
            <person name="Piffanelli P."/>
            <person name="Wedler H."/>
            <person name="Wedler E."/>
            <person name="Wambutt R."/>
            <person name="Weitzenegger T."/>
            <person name="Pohl T."/>
            <person name="Terryn N."/>
            <person name="Gielen J."/>
            <person name="Villarroel R."/>
            <person name="De Clercq R."/>
            <person name="van Montagu M."/>
            <person name="Lecharny A."/>
            <person name="Aubourg S."/>
            <person name="Gy I."/>
            <person name="Kreis M."/>
            <person name="Lao N."/>
            <person name="Kavanagh T."/>
            <person name="Hempel S."/>
            <person name="Kotter P."/>
            <person name="Entian K.-D."/>
            <person name="Rieger M."/>
            <person name="Schaefer M."/>
            <person name="Funk B."/>
            <person name="Mueller-Auer S."/>
            <person name="Silvey M."/>
            <person name="James R."/>
            <person name="Monfort A."/>
            <person name="Pons A."/>
            <person name="Puigdomenech P."/>
            <person name="Douka A."/>
            <person name="Voukelatou E."/>
            <person name="Milioni D."/>
            <person name="Hatzopoulos P."/>
            <person name="Piravandi E."/>
            <person name="Obermaier B."/>
            <person name="Hilbert H."/>
            <person name="Duesterhoeft A."/>
            <person name="Moores T."/>
            <person name="Jones J.D.G."/>
            <person name="Eneva T."/>
            <person name="Palme K."/>
            <person name="Benes V."/>
            <person name="Rechmann S."/>
            <person name="Ansorge W."/>
            <person name="Cooke R."/>
            <person name="Berger C."/>
            <person name="Delseny M."/>
            <person name="Voet M."/>
            <person name="Volckaert G."/>
            <person name="Mewes H.-W."/>
            <person name="Klosterman S."/>
            <person name="Schueller C."/>
            <person name="Chalwatzis N."/>
        </authorList>
    </citation>
    <scope>NUCLEOTIDE SEQUENCE [LARGE SCALE GENOMIC DNA]</scope>
    <source>
        <strain>cv. Columbia</strain>
    </source>
</reference>
<reference key="2">
    <citation type="journal article" date="1999" name="Nature">
        <title>Sequence and analysis of chromosome 4 of the plant Arabidopsis thaliana.</title>
        <authorList>
            <person name="Mayer K.F.X."/>
            <person name="Schueller C."/>
            <person name="Wambutt R."/>
            <person name="Murphy G."/>
            <person name="Volckaert G."/>
            <person name="Pohl T."/>
            <person name="Duesterhoeft A."/>
            <person name="Stiekema W."/>
            <person name="Entian K.-D."/>
            <person name="Terryn N."/>
            <person name="Harris B."/>
            <person name="Ansorge W."/>
            <person name="Brandt P."/>
            <person name="Grivell L.A."/>
            <person name="Rieger M."/>
            <person name="Weichselgartner M."/>
            <person name="de Simone V."/>
            <person name="Obermaier B."/>
            <person name="Mache R."/>
            <person name="Mueller M."/>
            <person name="Kreis M."/>
            <person name="Delseny M."/>
            <person name="Puigdomenech P."/>
            <person name="Watson M."/>
            <person name="Schmidtheini T."/>
            <person name="Reichert B."/>
            <person name="Portetelle D."/>
            <person name="Perez-Alonso M."/>
            <person name="Boutry M."/>
            <person name="Bancroft I."/>
            <person name="Vos P."/>
            <person name="Hoheisel J."/>
            <person name="Zimmermann W."/>
            <person name="Wedler H."/>
            <person name="Ridley P."/>
            <person name="Langham S.-A."/>
            <person name="McCullagh B."/>
            <person name="Bilham L."/>
            <person name="Robben J."/>
            <person name="van der Schueren J."/>
            <person name="Grymonprez B."/>
            <person name="Chuang Y.-J."/>
            <person name="Vandenbussche F."/>
            <person name="Braeken M."/>
            <person name="Weltjens I."/>
            <person name="Voet M."/>
            <person name="Bastiaens I."/>
            <person name="Aert R."/>
            <person name="Defoor E."/>
            <person name="Weitzenegger T."/>
            <person name="Bothe G."/>
            <person name="Ramsperger U."/>
            <person name="Hilbert H."/>
            <person name="Braun M."/>
            <person name="Holzer E."/>
            <person name="Brandt A."/>
            <person name="Peters S."/>
            <person name="van Staveren M."/>
            <person name="Dirkse W."/>
            <person name="Mooijman P."/>
            <person name="Klein Lankhorst R."/>
            <person name="Rose M."/>
            <person name="Hauf J."/>
            <person name="Koetter P."/>
            <person name="Berneiser S."/>
            <person name="Hempel S."/>
            <person name="Feldpausch M."/>
            <person name="Lamberth S."/>
            <person name="Van den Daele H."/>
            <person name="De Keyser A."/>
            <person name="Buysshaert C."/>
            <person name="Gielen J."/>
            <person name="Villarroel R."/>
            <person name="De Clercq R."/>
            <person name="van Montagu M."/>
            <person name="Rogers J."/>
            <person name="Cronin A."/>
            <person name="Quail M.A."/>
            <person name="Bray-Allen S."/>
            <person name="Clark L."/>
            <person name="Doggett J."/>
            <person name="Hall S."/>
            <person name="Kay M."/>
            <person name="Lennard N."/>
            <person name="McLay K."/>
            <person name="Mayes R."/>
            <person name="Pettett A."/>
            <person name="Rajandream M.A."/>
            <person name="Lyne M."/>
            <person name="Benes V."/>
            <person name="Rechmann S."/>
            <person name="Borkova D."/>
            <person name="Bloecker H."/>
            <person name="Scharfe M."/>
            <person name="Grimm M."/>
            <person name="Loehnert T.-H."/>
            <person name="Dose S."/>
            <person name="de Haan M."/>
            <person name="Maarse A.C."/>
            <person name="Schaefer M."/>
            <person name="Mueller-Auer S."/>
            <person name="Gabel C."/>
            <person name="Fuchs M."/>
            <person name="Fartmann B."/>
            <person name="Granderath K."/>
            <person name="Dauner D."/>
            <person name="Herzl A."/>
            <person name="Neumann S."/>
            <person name="Argiriou A."/>
            <person name="Vitale D."/>
            <person name="Liguori R."/>
            <person name="Piravandi E."/>
            <person name="Massenet O."/>
            <person name="Quigley F."/>
            <person name="Clabauld G."/>
            <person name="Muendlein A."/>
            <person name="Felber R."/>
            <person name="Schnabl S."/>
            <person name="Hiller R."/>
            <person name="Schmidt W."/>
            <person name="Lecharny A."/>
            <person name="Aubourg S."/>
            <person name="Chefdor F."/>
            <person name="Cooke R."/>
            <person name="Berger C."/>
            <person name="Monfort A."/>
            <person name="Casacuberta E."/>
            <person name="Gibbons T."/>
            <person name="Weber N."/>
            <person name="Vandenbol M."/>
            <person name="Bargues M."/>
            <person name="Terol J."/>
            <person name="Torres A."/>
            <person name="Perez-Perez A."/>
            <person name="Purnelle B."/>
            <person name="Bent E."/>
            <person name="Johnson S."/>
            <person name="Tacon D."/>
            <person name="Jesse T."/>
            <person name="Heijnen L."/>
            <person name="Schwarz S."/>
            <person name="Scholler P."/>
            <person name="Heber S."/>
            <person name="Francs P."/>
            <person name="Bielke C."/>
            <person name="Frishman D."/>
            <person name="Haase D."/>
            <person name="Lemcke K."/>
            <person name="Mewes H.-W."/>
            <person name="Stocker S."/>
            <person name="Zaccaria P."/>
            <person name="Bevan M."/>
            <person name="Wilson R.K."/>
            <person name="de la Bastide M."/>
            <person name="Habermann K."/>
            <person name="Parnell L."/>
            <person name="Dedhia N."/>
            <person name="Gnoj L."/>
            <person name="Schutz K."/>
            <person name="Huang E."/>
            <person name="Spiegel L."/>
            <person name="Sekhon M."/>
            <person name="Murray J."/>
            <person name="Sheet P."/>
            <person name="Cordes M."/>
            <person name="Abu-Threideh J."/>
            <person name="Stoneking T."/>
            <person name="Kalicki J."/>
            <person name="Graves T."/>
            <person name="Harmon G."/>
            <person name="Edwards J."/>
            <person name="Latreille P."/>
            <person name="Courtney L."/>
            <person name="Cloud J."/>
            <person name="Abbott A."/>
            <person name="Scott K."/>
            <person name="Johnson D."/>
            <person name="Minx P."/>
            <person name="Bentley D."/>
            <person name="Fulton B."/>
            <person name="Miller N."/>
            <person name="Greco T."/>
            <person name="Kemp K."/>
            <person name="Kramer J."/>
            <person name="Fulton L."/>
            <person name="Mardis E."/>
            <person name="Dante M."/>
            <person name="Pepin K."/>
            <person name="Hillier L.W."/>
            <person name="Nelson J."/>
            <person name="Spieth J."/>
            <person name="Ryan E."/>
            <person name="Andrews S."/>
            <person name="Geisel C."/>
            <person name="Layman D."/>
            <person name="Du H."/>
            <person name="Ali J."/>
            <person name="Berghoff A."/>
            <person name="Jones K."/>
            <person name="Drone K."/>
            <person name="Cotton M."/>
            <person name="Joshu C."/>
            <person name="Antonoiu B."/>
            <person name="Zidanic M."/>
            <person name="Strong C."/>
            <person name="Sun H."/>
            <person name="Lamar B."/>
            <person name="Yordan C."/>
            <person name="Ma P."/>
            <person name="Zhong J."/>
            <person name="Preston R."/>
            <person name="Vil D."/>
            <person name="Shekher M."/>
            <person name="Matero A."/>
            <person name="Shah R."/>
            <person name="Swaby I.K."/>
            <person name="O'Shaughnessy A."/>
            <person name="Rodriguez M."/>
            <person name="Hoffman J."/>
            <person name="Till S."/>
            <person name="Granat S."/>
            <person name="Shohdy N."/>
            <person name="Hasegawa A."/>
            <person name="Hameed A."/>
            <person name="Lodhi M."/>
            <person name="Johnson A."/>
            <person name="Chen E."/>
            <person name="Marra M.A."/>
            <person name="Martienssen R."/>
            <person name="McCombie W.R."/>
        </authorList>
    </citation>
    <scope>NUCLEOTIDE SEQUENCE [LARGE SCALE GENOMIC DNA]</scope>
    <source>
        <strain>cv. Columbia</strain>
    </source>
</reference>
<reference key="3">
    <citation type="journal article" date="2017" name="Plant J.">
        <title>Araport11: a complete reannotation of the Arabidopsis thaliana reference genome.</title>
        <authorList>
            <person name="Cheng C.Y."/>
            <person name="Krishnakumar V."/>
            <person name="Chan A.P."/>
            <person name="Thibaud-Nissen F."/>
            <person name="Schobel S."/>
            <person name="Town C.D."/>
        </authorList>
    </citation>
    <scope>GENOME REANNOTATION</scope>
    <source>
        <strain>cv. Columbia</strain>
    </source>
</reference>
<reference key="4">
    <citation type="journal article" date="2003" name="Science">
        <title>Empirical analysis of transcriptional activity in the Arabidopsis genome.</title>
        <authorList>
            <person name="Yamada K."/>
            <person name="Lim J."/>
            <person name="Dale J.M."/>
            <person name="Chen H."/>
            <person name="Shinn P."/>
            <person name="Palm C.J."/>
            <person name="Southwick A.M."/>
            <person name="Wu H.C."/>
            <person name="Kim C.J."/>
            <person name="Nguyen M."/>
            <person name="Pham P.K."/>
            <person name="Cheuk R.F."/>
            <person name="Karlin-Newmann G."/>
            <person name="Liu S.X."/>
            <person name="Lam B."/>
            <person name="Sakano H."/>
            <person name="Wu T."/>
            <person name="Yu G."/>
            <person name="Miranda M."/>
            <person name="Quach H.L."/>
            <person name="Tripp M."/>
            <person name="Chang C.H."/>
            <person name="Lee J.M."/>
            <person name="Toriumi M.J."/>
            <person name="Chan M.M."/>
            <person name="Tang C.C."/>
            <person name="Onodera C.S."/>
            <person name="Deng J.M."/>
            <person name="Akiyama K."/>
            <person name="Ansari Y."/>
            <person name="Arakawa T."/>
            <person name="Banh J."/>
            <person name="Banno F."/>
            <person name="Bowser L."/>
            <person name="Brooks S.Y."/>
            <person name="Carninci P."/>
            <person name="Chao Q."/>
            <person name="Choy N."/>
            <person name="Enju A."/>
            <person name="Goldsmith A.D."/>
            <person name="Gurjal M."/>
            <person name="Hansen N.F."/>
            <person name="Hayashizaki Y."/>
            <person name="Johnson-Hopson C."/>
            <person name="Hsuan V.W."/>
            <person name="Iida K."/>
            <person name="Karnes M."/>
            <person name="Khan S."/>
            <person name="Koesema E."/>
            <person name="Ishida J."/>
            <person name="Jiang P.X."/>
            <person name="Jones T."/>
            <person name="Kawai J."/>
            <person name="Kamiya A."/>
            <person name="Meyers C."/>
            <person name="Nakajima M."/>
            <person name="Narusaka M."/>
            <person name="Seki M."/>
            <person name="Sakurai T."/>
            <person name="Satou M."/>
            <person name="Tamse R."/>
            <person name="Vaysberg M."/>
            <person name="Wallender E.K."/>
            <person name="Wong C."/>
            <person name="Yamamura Y."/>
            <person name="Yuan S."/>
            <person name="Shinozaki K."/>
            <person name="Davis R.W."/>
            <person name="Theologis A."/>
            <person name="Ecker J.R."/>
        </authorList>
    </citation>
    <scope>NUCLEOTIDE SEQUENCE [LARGE SCALE MRNA]</scope>
    <source>
        <strain>cv. Columbia</strain>
    </source>
</reference>
<reference key="5">
    <citation type="journal article" date="2004" name="J. Plant Physiol.">
        <title>Analysis of an Arabidopsis thaliana protein family, structurally related to cytochromes b561 and potentially involved in catecholamine biochemistry in plants.</title>
        <authorList>
            <person name="Verelst W."/>
            <person name="Asard H."/>
        </authorList>
    </citation>
    <scope>DOMAIN</scope>
    <scope>FUNCTION</scope>
</reference>
<reference key="6">
    <citation type="journal article" date="2005" name="Biochim. Biophys. Acta">
        <title>Cytochrome b561 protein family: expanding roles and versatile transmembrane electron transfer abilities as predicted by a new classification system and protein sequence motif analyses.</title>
        <authorList>
            <person name="Tsubaki M."/>
            <person name="Takeuchi F."/>
            <person name="Nakanishi N."/>
        </authorList>
    </citation>
    <scope>GENE FAMILY</scope>
    <scope>NOMENCLATURE</scope>
</reference>
<reference key="7">
    <citation type="journal article" date="2009" name="Plant Physiol.">
        <title>Auxin-responsive genes AIR12 code for a new family of plasma membrane b-type cytochromes specific to flowering plants.</title>
        <authorList>
            <person name="Preger V."/>
            <person name="Tango N."/>
            <person name="Marchand C."/>
            <person name="Lemaire S.D."/>
            <person name="Carbonera D."/>
            <person name="Di Valentin M."/>
            <person name="Costa A."/>
            <person name="Pupillo P."/>
            <person name="Trost P."/>
        </authorList>
    </citation>
    <scope>DOMAIN</scope>
</reference>
<reference key="8">
    <citation type="journal article" date="2013" name="Antioxid. Redox Signal.">
        <title>Cytochromes b561: ascorbate-mediated trans-membrane electron transport.</title>
        <authorList>
            <person name="Asard H."/>
            <person name="Barbaro R."/>
            <person name="Trost P."/>
            <person name="Berczi A."/>
        </authorList>
    </citation>
    <scope>REVIEW</scope>
</reference>
<feature type="signal peptide" evidence="2">
    <location>
        <begin position="1"/>
        <end position="31"/>
    </location>
</feature>
<feature type="chain" id="PRO_0000430473" description="Cytochrome b561 and DOMON domain-containing protein At4g17280">
    <location>
        <begin position="32"/>
        <end position="402"/>
    </location>
</feature>
<feature type="transmembrane region" description="Helical; Name=1" evidence="2">
    <location>
        <begin position="218"/>
        <end position="238"/>
    </location>
</feature>
<feature type="transmembrane region" description="Helical; Name=2" evidence="2">
    <location>
        <begin position="250"/>
        <end position="270"/>
    </location>
</feature>
<feature type="transmembrane region" description="Helical; Name=3" evidence="2">
    <location>
        <begin position="290"/>
        <end position="310"/>
    </location>
</feature>
<feature type="transmembrane region" description="Helical; Name=4" evidence="2">
    <location>
        <begin position="326"/>
        <end position="346"/>
    </location>
</feature>
<feature type="transmembrane region" description="Helical; Name=5" evidence="2">
    <location>
        <begin position="359"/>
        <end position="379"/>
    </location>
</feature>
<feature type="domain" description="DOMON" evidence="4">
    <location>
        <begin position="54"/>
        <end position="171"/>
    </location>
</feature>
<feature type="domain" description="Cytochrome b561" evidence="3">
    <location>
        <begin position="183"/>
        <end position="379"/>
    </location>
</feature>
<feature type="binding site" description="axial binding residue" evidence="1">
    <location>
        <position position="219"/>
    </location>
    <ligand>
        <name>heme b</name>
        <dbReference type="ChEBI" id="CHEBI:60344"/>
        <label>1</label>
    </ligand>
    <ligandPart>
        <name>Fe</name>
        <dbReference type="ChEBI" id="CHEBI:18248"/>
    </ligandPart>
</feature>
<feature type="binding site" description="axial binding residue" evidence="1">
    <location>
        <position position="255"/>
    </location>
    <ligand>
        <name>heme b</name>
        <dbReference type="ChEBI" id="CHEBI:60344"/>
        <label>2</label>
    </ligand>
    <ligandPart>
        <name>Fe</name>
        <dbReference type="ChEBI" id="CHEBI:18248"/>
    </ligandPart>
</feature>
<feature type="binding site" description="axial binding residue" evidence="1">
    <location>
        <position position="288"/>
    </location>
    <ligand>
        <name>heme b</name>
        <dbReference type="ChEBI" id="CHEBI:60344"/>
        <label>1</label>
    </ligand>
    <ligandPart>
        <name>Fe</name>
        <dbReference type="ChEBI" id="CHEBI:18248"/>
    </ligandPart>
</feature>
<feature type="binding site" description="axial binding residue" evidence="1">
    <location>
        <position position="324"/>
    </location>
    <ligand>
        <name>heme b</name>
        <dbReference type="ChEBI" id="CHEBI:60344"/>
        <label>2</label>
    </ligand>
    <ligandPart>
        <name>Fe</name>
        <dbReference type="ChEBI" id="CHEBI:18248"/>
    </ligandPart>
</feature>
<evidence type="ECO:0000250" key="1">
    <source>
        <dbReference type="UniProtKB" id="Q9SWS1"/>
    </source>
</evidence>
<evidence type="ECO:0000255" key="2"/>
<evidence type="ECO:0000255" key="3">
    <source>
        <dbReference type="PROSITE-ProRule" id="PRU00242"/>
    </source>
</evidence>
<evidence type="ECO:0000255" key="4">
    <source>
        <dbReference type="PROSITE-ProRule" id="PRU00246"/>
    </source>
</evidence>
<evidence type="ECO:0000269" key="5">
    <source>
    </source>
</evidence>
<evidence type="ECO:0000269" key="6">
    <source>
    </source>
</evidence>
<evidence type="ECO:0000305" key="7"/>
<protein>
    <recommendedName>
        <fullName>Cytochrome b561 and DOMON domain-containing protein At4g17280</fullName>
    </recommendedName>
    <alternativeName>
        <fullName>Protein b561A.tha2</fullName>
    </alternativeName>
</protein>
<comment type="function">
    <text evidence="5">May act as a catecholamine-responsive trans-membrane electron transporter.</text>
</comment>
<comment type="cofactor">
    <cofactor evidence="1">
        <name>heme b</name>
        <dbReference type="ChEBI" id="CHEBI:60344"/>
    </cofactor>
    <text evidence="1">Binds 2 heme b groups non-covalently.</text>
</comment>
<comment type="subcellular location">
    <subcellularLocation>
        <location evidence="7">Membrane</location>
        <topology evidence="7">Multi-pass membrane protein</topology>
    </subcellularLocation>
</comment>
<comment type="domain">
    <text evidence="5 6">DOMON domain could bind catecholamines and thereby could regulate the cytochrome b561 domain function (PubMed:15022831). DOMON domain could bind one heme b (PubMed:19386804).</text>
</comment>
<comment type="sequence caution" evidence="7">
    <conflict type="erroneous gene model prediction">
        <sequence resource="EMBL-CDS" id="CAB10509"/>
    </conflict>
</comment>
<comment type="sequence caution" evidence="7">
    <conflict type="erroneous gene model prediction">
        <sequence resource="EMBL-CDS" id="CAB78731"/>
    </conflict>
</comment>